<reference key="1">
    <citation type="submission" date="2009-03" db="EMBL/GenBank/DDBJ databases">
        <title>Complete genome sequence of Edwardsiella ictaluri 93-146.</title>
        <authorList>
            <person name="Williams M.L."/>
            <person name="Gillaspy A.F."/>
            <person name="Dyer D.W."/>
            <person name="Thune R.L."/>
            <person name="Waldbieser G.C."/>
            <person name="Schuster S.C."/>
            <person name="Gipson J."/>
            <person name="Zaitshik J."/>
            <person name="Landry C."/>
            <person name="Lawrence M.L."/>
        </authorList>
    </citation>
    <scope>NUCLEOTIDE SEQUENCE [LARGE SCALE GENOMIC DNA]</scope>
    <source>
        <strain>93-146</strain>
    </source>
</reference>
<name>RL15_EDWI9</name>
<accession>C5BGK6</accession>
<keyword id="KW-0687">Ribonucleoprotein</keyword>
<keyword id="KW-0689">Ribosomal protein</keyword>
<keyword id="KW-0694">RNA-binding</keyword>
<keyword id="KW-0699">rRNA-binding</keyword>
<gene>
    <name evidence="1" type="primary">rplO</name>
    <name type="ordered locus">NT01EI_3575</name>
</gene>
<organism>
    <name type="scientific">Edwardsiella ictaluri (strain 93-146)</name>
    <dbReference type="NCBI Taxonomy" id="634503"/>
    <lineage>
        <taxon>Bacteria</taxon>
        <taxon>Pseudomonadati</taxon>
        <taxon>Pseudomonadota</taxon>
        <taxon>Gammaproteobacteria</taxon>
        <taxon>Enterobacterales</taxon>
        <taxon>Hafniaceae</taxon>
        <taxon>Edwardsiella</taxon>
    </lineage>
</organism>
<protein>
    <recommendedName>
        <fullName evidence="1">Large ribosomal subunit protein uL15</fullName>
    </recommendedName>
    <alternativeName>
        <fullName evidence="3">50S ribosomal protein L15</fullName>
    </alternativeName>
</protein>
<feature type="chain" id="PRO_1000214703" description="Large ribosomal subunit protein uL15">
    <location>
        <begin position="1"/>
        <end position="144"/>
    </location>
</feature>
<feature type="region of interest" description="Disordered" evidence="2">
    <location>
        <begin position="1"/>
        <end position="53"/>
    </location>
</feature>
<feature type="compositionally biased region" description="Gly residues" evidence="2">
    <location>
        <begin position="21"/>
        <end position="31"/>
    </location>
</feature>
<proteinExistence type="inferred from homology"/>
<evidence type="ECO:0000255" key="1">
    <source>
        <dbReference type="HAMAP-Rule" id="MF_01341"/>
    </source>
</evidence>
<evidence type="ECO:0000256" key="2">
    <source>
        <dbReference type="SAM" id="MobiDB-lite"/>
    </source>
</evidence>
<evidence type="ECO:0000305" key="3"/>
<sequence length="144" mass="15209">MRLNTLSPAEGSKHASKRLGRGIGSGLGKTGGRGHKGQKSRSGGGVRRGFEGGQMPLYRRLPKFGFTSRKAMVTAEIRLSEIALIEGDVIDLNVLKAANVIGPQIEFAKVMLSGEINRAVTLRGLRVSKGARAAIEAAGGKIEE</sequence>
<comment type="function">
    <text evidence="1">Binds to the 23S rRNA.</text>
</comment>
<comment type="subunit">
    <text evidence="1">Part of the 50S ribosomal subunit.</text>
</comment>
<comment type="similarity">
    <text evidence="1">Belongs to the universal ribosomal protein uL15 family.</text>
</comment>
<dbReference type="EMBL" id="CP001600">
    <property type="protein sequence ID" value="ACR70703.1"/>
    <property type="molecule type" value="Genomic_DNA"/>
</dbReference>
<dbReference type="RefSeq" id="WP_005290360.1">
    <property type="nucleotide sequence ID" value="NZ_CP169062.1"/>
</dbReference>
<dbReference type="SMR" id="C5BGK6"/>
<dbReference type="STRING" id="67780.B6E78_09475"/>
<dbReference type="GeneID" id="93122098"/>
<dbReference type="KEGG" id="eic:NT01EI_3575"/>
<dbReference type="HOGENOM" id="CLU_055188_4_2_6"/>
<dbReference type="OrthoDB" id="9810293at2"/>
<dbReference type="Proteomes" id="UP000001485">
    <property type="component" value="Chromosome"/>
</dbReference>
<dbReference type="GO" id="GO:0022625">
    <property type="term" value="C:cytosolic large ribosomal subunit"/>
    <property type="evidence" value="ECO:0007669"/>
    <property type="project" value="TreeGrafter"/>
</dbReference>
<dbReference type="GO" id="GO:0019843">
    <property type="term" value="F:rRNA binding"/>
    <property type="evidence" value="ECO:0007669"/>
    <property type="project" value="UniProtKB-UniRule"/>
</dbReference>
<dbReference type="GO" id="GO:0003735">
    <property type="term" value="F:structural constituent of ribosome"/>
    <property type="evidence" value="ECO:0007669"/>
    <property type="project" value="InterPro"/>
</dbReference>
<dbReference type="GO" id="GO:0006412">
    <property type="term" value="P:translation"/>
    <property type="evidence" value="ECO:0007669"/>
    <property type="project" value="UniProtKB-UniRule"/>
</dbReference>
<dbReference type="FunFam" id="3.100.10.10:FF:000003">
    <property type="entry name" value="50S ribosomal protein L15"/>
    <property type="match status" value="1"/>
</dbReference>
<dbReference type="Gene3D" id="3.100.10.10">
    <property type="match status" value="1"/>
</dbReference>
<dbReference type="HAMAP" id="MF_01341">
    <property type="entry name" value="Ribosomal_uL15"/>
    <property type="match status" value="1"/>
</dbReference>
<dbReference type="InterPro" id="IPR030878">
    <property type="entry name" value="Ribosomal_uL15"/>
</dbReference>
<dbReference type="InterPro" id="IPR021131">
    <property type="entry name" value="Ribosomal_uL15/eL18"/>
</dbReference>
<dbReference type="InterPro" id="IPR036227">
    <property type="entry name" value="Ribosomal_uL15/eL18_sf"/>
</dbReference>
<dbReference type="InterPro" id="IPR005749">
    <property type="entry name" value="Ribosomal_uL15_bac-type"/>
</dbReference>
<dbReference type="InterPro" id="IPR001196">
    <property type="entry name" value="Ribosomal_uL15_CS"/>
</dbReference>
<dbReference type="NCBIfam" id="TIGR01071">
    <property type="entry name" value="rplO_bact"/>
    <property type="match status" value="1"/>
</dbReference>
<dbReference type="PANTHER" id="PTHR12934">
    <property type="entry name" value="50S RIBOSOMAL PROTEIN L15"/>
    <property type="match status" value="1"/>
</dbReference>
<dbReference type="PANTHER" id="PTHR12934:SF11">
    <property type="entry name" value="LARGE RIBOSOMAL SUBUNIT PROTEIN UL15M"/>
    <property type="match status" value="1"/>
</dbReference>
<dbReference type="Pfam" id="PF00828">
    <property type="entry name" value="Ribosomal_L27A"/>
    <property type="match status" value="1"/>
</dbReference>
<dbReference type="SUPFAM" id="SSF52080">
    <property type="entry name" value="Ribosomal proteins L15p and L18e"/>
    <property type="match status" value="1"/>
</dbReference>
<dbReference type="PROSITE" id="PS00475">
    <property type="entry name" value="RIBOSOMAL_L15"/>
    <property type="match status" value="1"/>
</dbReference>